<keyword id="KW-0010">Activator</keyword>
<keyword id="KW-0175">Coiled coil</keyword>
<keyword id="KW-0539">Nucleus</keyword>
<keyword id="KW-1185">Reference proteome</keyword>
<keyword id="KW-0804">Transcription</keyword>
<keyword id="KW-0805">Transcription regulation</keyword>
<keyword id="KW-0833">Ubl conjugation pathway</keyword>
<evidence type="ECO:0000250" key="1"/>
<evidence type="ECO:0000255" key="2"/>
<evidence type="ECO:0000256" key="3">
    <source>
        <dbReference type="SAM" id="MobiDB-lite"/>
    </source>
</evidence>
<evidence type="ECO:0000305" key="4"/>
<gene>
    <name type="primary">med8</name>
    <name type="ORF">DDB_G0293824</name>
</gene>
<proteinExistence type="inferred from homology"/>
<feature type="chain" id="PRO_0000388648" description="Putative mediator of RNA polymerase II transcription subunit 8">
    <location>
        <begin position="1"/>
        <end position="524"/>
    </location>
</feature>
<feature type="region of interest" description="Disordered" evidence="3">
    <location>
        <begin position="312"/>
        <end position="340"/>
    </location>
</feature>
<feature type="region of interest" description="Disordered" evidence="3">
    <location>
        <begin position="356"/>
        <end position="379"/>
    </location>
</feature>
<feature type="region of interest" description="Disordered" evidence="3">
    <location>
        <begin position="430"/>
        <end position="451"/>
    </location>
</feature>
<feature type="coiled-coil region" evidence="2">
    <location>
        <begin position="117"/>
        <end position="146"/>
    </location>
</feature>
<feature type="coiled-coil region" evidence="2">
    <location>
        <begin position="175"/>
        <end position="211"/>
    </location>
</feature>
<feature type="coiled-coil region" evidence="2">
    <location>
        <begin position="398"/>
        <end position="478"/>
    </location>
</feature>
<feature type="compositionally biased region" description="Polar residues" evidence="3">
    <location>
        <begin position="314"/>
        <end position="333"/>
    </location>
</feature>
<feature type="compositionally biased region" description="Low complexity" evidence="3">
    <location>
        <begin position="356"/>
        <end position="374"/>
    </location>
</feature>
<name>MED8_DICDI</name>
<sequence length="524" mass="58691">MNGVDINSNLDSIKAKAEDIRNLLLTTSTGNWEDILGHFVVLSGEYGSLVREVNNIYDSVAVFPEQVTGDPNLIPNLLRTKLSPELETKNRDIINQYVSKNSTHYDPGNQEENIPPLKLHIKSFNDRIDKVDQEFENKIQQISKHKLTKPSASHDTAILKDILSITMLGSGIKINAQQQLAQQQQQQATINALQQQQRLLNAQQQQQQQQQPQALYKLPATNTANTSTNTPSSTIVINSPSPGGIHHNVPTPPTNLNAAGTRTSPPNVQQYVNSPPPQQQQQQQINTVIGTPNTIPTTPTATVSTAATYKPVASPQQQVTSKQVPIQSTNKPLPQQQPSIQIQPQQSIVQMVQNVLPNTTSPPVNNNNQSPINSGIGGGQFKPSAINIANANSGTSTIQQQIQLQQQQLQQQIQLQQQLAQQQQQNQQNQQNQQNQQNQQNQQIHQHIQHLTPQQQAQLQQQMLQQQQLQQQFQQQQLSQQLLQQQQLHQQQQPNQTIQNPFHNFQANNFRVQNPTNFNPPQNQ</sequence>
<dbReference type="EMBL" id="AAFI02000220">
    <property type="protein sequence ID" value="EAL60545.1"/>
    <property type="molecule type" value="Genomic_DNA"/>
</dbReference>
<dbReference type="RefSeq" id="XP_628953.1">
    <property type="nucleotide sequence ID" value="XM_628951.1"/>
</dbReference>
<dbReference type="SMR" id="Q54B97"/>
<dbReference type="STRING" id="44689.Q54B97"/>
<dbReference type="PaxDb" id="44689-DDB0237839"/>
<dbReference type="EnsemblProtists" id="EAL60545">
    <property type="protein sequence ID" value="EAL60545"/>
    <property type="gene ID" value="DDB_G0293824"/>
</dbReference>
<dbReference type="GeneID" id="8629430"/>
<dbReference type="KEGG" id="ddi:DDB_G0293824"/>
<dbReference type="dictyBase" id="DDB_G0293824">
    <property type="gene designation" value="med8"/>
</dbReference>
<dbReference type="VEuPathDB" id="AmoebaDB:DDB_G0293824"/>
<dbReference type="HOGENOM" id="CLU_520179_0_0_1"/>
<dbReference type="InParanoid" id="Q54B97"/>
<dbReference type="OMA" id="SKNSTHY"/>
<dbReference type="UniPathway" id="UPA00143"/>
<dbReference type="PRO" id="PR:Q54B97"/>
<dbReference type="Proteomes" id="UP000002195">
    <property type="component" value="Chromosome 6"/>
</dbReference>
<dbReference type="GO" id="GO:0005634">
    <property type="term" value="C:nucleus"/>
    <property type="evidence" value="ECO:0007669"/>
    <property type="project" value="UniProtKB-SubCell"/>
</dbReference>
<dbReference type="GO" id="GO:0016567">
    <property type="term" value="P:protein ubiquitination"/>
    <property type="evidence" value="ECO:0007669"/>
    <property type="project" value="UniProtKB-UniPathway"/>
</dbReference>
<dbReference type="PANTHER" id="PTHR13612">
    <property type="entry name" value="ENHANCER OF MRNA-DECAPPING PROTEIN 3"/>
    <property type="match status" value="1"/>
</dbReference>
<dbReference type="PANTHER" id="PTHR13612:SF0">
    <property type="entry name" value="ENHANCER OF MRNA-DECAPPING PROTEIN 3"/>
    <property type="match status" value="1"/>
</dbReference>
<accession>Q54B97</accession>
<organism>
    <name type="scientific">Dictyostelium discoideum</name>
    <name type="common">Social amoeba</name>
    <dbReference type="NCBI Taxonomy" id="44689"/>
    <lineage>
        <taxon>Eukaryota</taxon>
        <taxon>Amoebozoa</taxon>
        <taxon>Evosea</taxon>
        <taxon>Eumycetozoa</taxon>
        <taxon>Dictyostelia</taxon>
        <taxon>Dictyosteliales</taxon>
        <taxon>Dictyosteliaceae</taxon>
        <taxon>Dictyostelium</taxon>
    </lineage>
</organism>
<protein>
    <recommendedName>
        <fullName>Putative mediator of RNA polymerase II transcription subunit 8</fullName>
    </recommendedName>
    <alternativeName>
        <fullName>Putative mediator complex subunit 8</fullName>
    </alternativeName>
</protein>
<comment type="function">
    <text evidence="1">Component of the Mediator complex, a coactivator involved in the regulated transcription of nearly all RNA polymerase II-dependent genes. Mediator functions as a bridge to convey information from gene-specific regulatory proteins to the basal RNA polymerase II transcription machinery. Mediator is recruited to promoters by direct interactions with regulatory proteins and serves as a scaffold for the assembly of a functional preinitiation complex with RNA polymerase II and the general transcription factors. May play a role as a target recruitment subunit in E3 ubiquitin-protein ligase complexes and thus in ubiquitination and subsequent proteasomal degradation of target proteins (By similarity).</text>
</comment>
<comment type="pathway">
    <text>Protein modification; protein ubiquitination.</text>
</comment>
<comment type="subunit">
    <text evidence="1">Component of the Mediator complex. May be part of a multisubunit E3 ubiquitin-protein ligase complex (By similarity).</text>
</comment>
<comment type="subcellular location">
    <subcellularLocation>
        <location evidence="4">Nucleus</location>
    </subcellularLocation>
</comment>
<comment type="similarity">
    <text evidence="4">Belongs to the Mediator complex subunit 8 family.</text>
</comment>
<reference key="1">
    <citation type="journal article" date="2005" name="Nature">
        <title>The genome of the social amoeba Dictyostelium discoideum.</title>
        <authorList>
            <person name="Eichinger L."/>
            <person name="Pachebat J.A."/>
            <person name="Gloeckner G."/>
            <person name="Rajandream M.A."/>
            <person name="Sucgang R."/>
            <person name="Berriman M."/>
            <person name="Song J."/>
            <person name="Olsen R."/>
            <person name="Szafranski K."/>
            <person name="Xu Q."/>
            <person name="Tunggal B."/>
            <person name="Kummerfeld S."/>
            <person name="Madera M."/>
            <person name="Konfortov B.A."/>
            <person name="Rivero F."/>
            <person name="Bankier A.T."/>
            <person name="Lehmann R."/>
            <person name="Hamlin N."/>
            <person name="Davies R."/>
            <person name="Gaudet P."/>
            <person name="Fey P."/>
            <person name="Pilcher K."/>
            <person name="Chen G."/>
            <person name="Saunders D."/>
            <person name="Sodergren E.J."/>
            <person name="Davis P."/>
            <person name="Kerhornou A."/>
            <person name="Nie X."/>
            <person name="Hall N."/>
            <person name="Anjard C."/>
            <person name="Hemphill L."/>
            <person name="Bason N."/>
            <person name="Farbrother P."/>
            <person name="Desany B."/>
            <person name="Just E."/>
            <person name="Morio T."/>
            <person name="Rost R."/>
            <person name="Churcher C.M."/>
            <person name="Cooper J."/>
            <person name="Haydock S."/>
            <person name="van Driessche N."/>
            <person name="Cronin A."/>
            <person name="Goodhead I."/>
            <person name="Muzny D.M."/>
            <person name="Mourier T."/>
            <person name="Pain A."/>
            <person name="Lu M."/>
            <person name="Harper D."/>
            <person name="Lindsay R."/>
            <person name="Hauser H."/>
            <person name="James K.D."/>
            <person name="Quiles M."/>
            <person name="Madan Babu M."/>
            <person name="Saito T."/>
            <person name="Buchrieser C."/>
            <person name="Wardroper A."/>
            <person name="Felder M."/>
            <person name="Thangavelu M."/>
            <person name="Johnson D."/>
            <person name="Knights A."/>
            <person name="Loulseged H."/>
            <person name="Mungall K.L."/>
            <person name="Oliver K."/>
            <person name="Price C."/>
            <person name="Quail M.A."/>
            <person name="Urushihara H."/>
            <person name="Hernandez J."/>
            <person name="Rabbinowitsch E."/>
            <person name="Steffen D."/>
            <person name="Sanders M."/>
            <person name="Ma J."/>
            <person name="Kohara Y."/>
            <person name="Sharp S."/>
            <person name="Simmonds M.N."/>
            <person name="Spiegler S."/>
            <person name="Tivey A."/>
            <person name="Sugano S."/>
            <person name="White B."/>
            <person name="Walker D."/>
            <person name="Woodward J.R."/>
            <person name="Winckler T."/>
            <person name="Tanaka Y."/>
            <person name="Shaulsky G."/>
            <person name="Schleicher M."/>
            <person name="Weinstock G.M."/>
            <person name="Rosenthal A."/>
            <person name="Cox E.C."/>
            <person name="Chisholm R.L."/>
            <person name="Gibbs R.A."/>
            <person name="Loomis W.F."/>
            <person name="Platzer M."/>
            <person name="Kay R.R."/>
            <person name="Williams J.G."/>
            <person name="Dear P.H."/>
            <person name="Noegel A.A."/>
            <person name="Barrell B.G."/>
            <person name="Kuspa A."/>
        </authorList>
    </citation>
    <scope>NUCLEOTIDE SEQUENCE [LARGE SCALE GENOMIC DNA]</scope>
    <source>
        <strain>AX4</strain>
    </source>
</reference>
<reference key="2">
    <citation type="journal article" date="2008" name="Nucleic Acids Res.">
        <title>Comparative genomics supports a deep evolutionary origin for the large, four-module transcriptional mediator complex.</title>
        <authorList>
            <person name="Bourbon H.-M."/>
        </authorList>
    </citation>
    <scope>NOMENCLATURE</scope>
</reference>